<protein>
    <recommendedName>
        <fullName evidence="1">Chaperone protein DnaK</fullName>
    </recommendedName>
    <alternativeName>
        <fullName evidence="1">HSP70</fullName>
    </alternativeName>
    <alternativeName>
        <fullName evidence="1">Heat shock 70 kDa protein</fullName>
    </alternativeName>
    <alternativeName>
        <fullName evidence="1">Heat shock protein 70</fullName>
    </alternativeName>
</protein>
<proteinExistence type="inferred from homology"/>
<organism>
    <name type="scientific">Salinispora tropica (strain ATCC BAA-916 / DSM 44818 / JCM 13857 / NBRC 105044 / CNB-440)</name>
    <dbReference type="NCBI Taxonomy" id="369723"/>
    <lineage>
        <taxon>Bacteria</taxon>
        <taxon>Bacillati</taxon>
        <taxon>Actinomycetota</taxon>
        <taxon>Actinomycetes</taxon>
        <taxon>Micromonosporales</taxon>
        <taxon>Micromonosporaceae</taxon>
        <taxon>Salinispora</taxon>
    </lineage>
</organism>
<accession>A4X148</accession>
<dbReference type="EMBL" id="CP000667">
    <property type="protein sequence ID" value="ABP52598.1"/>
    <property type="molecule type" value="Genomic_DNA"/>
</dbReference>
<dbReference type="RefSeq" id="WP_011904035.1">
    <property type="nucleotide sequence ID" value="NC_009380.1"/>
</dbReference>
<dbReference type="SMR" id="A4X148"/>
<dbReference type="STRING" id="369723.Strop_0113"/>
<dbReference type="KEGG" id="stp:Strop_0113"/>
<dbReference type="PATRIC" id="fig|369723.5.peg.112"/>
<dbReference type="eggNOG" id="COG0443">
    <property type="taxonomic scope" value="Bacteria"/>
</dbReference>
<dbReference type="HOGENOM" id="CLU_005965_2_1_11"/>
<dbReference type="Proteomes" id="UP000000235">
    <property type="component" value="Chromosome"/>
</dbReference>
<dbReference type="GO" id="GO:0005524">
    <property type="term" value="F:ATP binding"/>
    <property type="evidence" value="ECO:0007669"/>
    <property type="project" value="UniProtKB-UniRule"/>
</dbReference>
<dbReference type="GO" id="GO:0140662">
    <property type="term" value="F:ATP-dependent protein folding chaperone"/>
    <property type="evidence" value="ECO:0007669"/>
    <property type="project" value="InterPro"/>
</dbReference>
<dbReference type="GO" id="GO:0051082">
    <property type="term" value="F:unfolded protein binding"/>
    <property type="evidence" value="ECO:0007669"/>
    <property type="project" value="InterPro"/>
</dbReference>
<dbReference type="CDD" id="cd10234">
    <property type="entry name" value="ASKHA_NBD_HSP70_DnaK-like"/>
    <property type="match status" value="1"/>
</dbReference>
<dbReference type="FunFam" id="2.60.34.10:FF:000014">
    <property type="entry name" value="Chaperone protein DnaK HSP70"/>
    <property type="match status" value="1"/>
</dbReference>
<dbReference type="FunFam" id="1.20.1270.10:FF:000001">
    <property type="entry name" value="Molecular chaperone DnaK"/>
    <property type="match status" value="1"/>
</dbReference>
<dbReference type="FunFam" id="3.30.420.40:FF:000071">
    <property type="entry name" value="Molecular chaperone DnaK"/>
    <property type="match status" value="1"/>
</dbReference>
<dbReference type="FunFam" id="3.90.640.10:FF:000003">
    <property type="entry name" value="Molecular chaperone DnaK"/>
    <property type="match status" value="1"/>
</dbReference>
<dbReference type="Gene3D" id="1.20.1270.10">
    <property type="match status" value="1"/>
</dbReference>
<dbReference type="Gene3D" id="3.30.420.40">
    <property type="match status" value="2"/>
</dbReference>
<dbReference type="Gene3D" id="3.90.640.10">
    <property type="entry name" value="Actin, Chain A, domain 4"/>
    <property type="match status" value="1"/>
</dbReference>
<dbReference type="Gene3D" id="2.60.34.10">
    <property type="entry name" value="Substrate Binding Domain Of DNAk, Chain A, domain 1"/>
    <property type="match status" value="1"/>
</dbReference>
<dbReference type="HAMAP" id="MF_00332">
    <property type="entry name" value="DnaK"/>
    <property type="match status" value="1"/>
</dbReference>
<dbReference type="InterPro" id="IPR043129">
    <property type="entry name" value="ATPase_NBD"/>
</dbReference>
<dbReference type="InterPro" id="IPR012725">
    <property type="entry name" value="Chaperone_DnaK"/>
</dbReference>
<dbReference type="InterPro" id="IPR018181">
    <property type="entry name" value="Heat_shock_70_CS"/>
</dbReference>
<dbReference type="InterPro" id="IPR029048">
    <property type="entry name" value="HSP70_C_sf"/>
</dbReference>
<dbReference type="InterPro" id="IPR029047">
    <property type="entry name" value="HSP70_peptide-bd_sf"/>
</dbReference>
<dbReference type="InterPro" id="IPR013126">
    <property type="entry name" value="Hsp_70_fam"/>
</dbReference>
<dbReference type="NCBIfam" id="NF001413">
    <property type="entry name" value="PRK00290.1"/>
    <property type="match status" value="1"/>
</dbReference>
<dbReference type="NCBIfam" id="TIGR02350">
    <property type="entry name" value="prok_dnaK"/>
    <property type="match status" value="1"/>
</dbReference>
<dbReference type="PANTHER" id="PTHR19375">
    <property type="entry name" value="HEAT SHOCK PROTEIN 70KDA"/>
    <property type="match status" value="1"/>
</dbReference>
<dbReference type="Pfam" id="PF00012">
    <property type="entry name" value="HSP70"/>
    <property type="match status" value="2"/>
</dbReference>
<dbReference type="PRINTS" id="PR00301">
    <property type="entry name" value="HEATSHOCK70"/>
</dbReference>
<dbReference type="SUPFAM" id="SSF53067">
    <property type="entry name" value="Actin-like ATPase domain"/>
    <property type="match status" value="2"/>
</dbReference>
<dbReference type="SUPFAM" id="SSF100920">
    <property type="entry name" value="Heat shock protein 70kD (HSP70), peptide-binding domain"/>
    <property type="match status" value="1"/>
</dbReference>
<dbReference type="PROSITE" id="PS00297">
    <property type="entry name" value="HSP70_1"/>
    <property type="match status" value="1"/>
</dbReference>
<dbReference type="PROSITE" id="PS00329">
    <property type="entry name" value="HSP70_2"/>
    <property type="match status" value="1"/>
</dbReference>
<dbReference type="PROSITE" id="PS01036">
    <property type="entry name" value="HSP70_3"/>
    <property type="match status" value="1"/>
</dbReference>
<keyword id="KW-0067">ATP-binding</keyword>
<keyword id="KW-0143">Chaperone</keyword>
<keyword id="KW-0547">Nucleotide-binding</keyword>
<keyword id="KW-0597">Phosphoprotein</keyword>
<keyword id="KW-1185">Reference proteome</keyword>
<keyword id="KW-0346">Stress response</keyword>
<sequence length="613" mass="65916">MARAVGIDLGTTNSCVSVLEGGEPTVIANAEGSRTTPSIVAFARNGEVLVGEVAKRQAVTNPDRTIRSVKREIGTDWFVDIDDKKYTPQEISARTLMKLKRDAEAYLGEQITDAVITVPAYFNDGQRQATKEAGEIAGFNVLRIVNEPTAAALAYGLDKGSKEQTVLVFDLGGGTFDVSLLELAEGVIEVKSTSGDNLLGGDDWDQRIIDHLVKTFNGEHGIDLAQDKMAMQRLKEAAEKAKIELSAAATSNINLPYITAGAAGPLHLDVTITRAEFQRMTQDLLDRCKGPFEQAVKDAGIKVGDVEHVILVGGSTRMPAVTELVKQLTGRDPNKGVNPDEVVAVGAALQAGVLKGEVKDVLLLDVTPLSLGIETKGGIFTKLIERNTTIPTKRSEVFTTADDNQPSVLIQVFQGEREIAAYNKKLGTFELTGLPPAPRGMPQIEVTFDIDANGIVNVHAKDTGTGKEQKMTVTAGSSLPKEDIERMRRDAEEHAEEDKQRREEAETRNVAEALQWQTEKFLAESGDKLPTESRDQINEALGELRSALGGQDIEKIKSAHAQLAQVSQQAGSQLYTQQQGEQAGATGDQAGAQAGGPDDVVDAEIVDEDKGKK</sequence>
<comment type="function">
    <text evidence="1">Acts as a chaperone.</text>
</comment>
<comment type="induction">
    <text evidence="1">By stress conditions e.g. heat shock.</text>
</comment>
<comment type="similarity">
    <text evidence="1">Belongs to the heat shock protein 70 family.</text>
</comment>
<gene>
    <name evidence="1" type="primary">dnaK</name>
    <name type="ordered locus">Strop_0113</name>
</gene>
<reference key="1">
    <citation type="journal article" date="2007" name="Proc. Natl. Acad. Sci. U.S.A.">
        <title>Genome sequencing reveals complex secondary metabolome in the marine actinomycete Salinispora tropica.</title>
        <authorList>
            <person name="Udwary D.W."/>
            <person name="Zeigler L."/>
            <person name="Asolkar R.N."/>
            <person name="Singan V."/>
            <person name="Lapidus A."/>
            <person name="Fenical W."/>
            <person name="Jensen P.R."/>
            <person name="Moore B.S."/>
        </authorList>
    </citation>
    <scope>NUCLEOTIDE SEQUENCE [LARGE SCALE GENOMIC DNA]</scope>
    <source>
        <strain>ATCC BAA-916 / DSM 44818 / JCM 13857 / NBRC 105044 / CNB-440</strain>
    </source>
</reference>
<name>DNAK_SALTO</name>
<evidence type="ECO:0000255" key="1">
    <source>
        <dbReference type="HAMAP-Rule" id="MF_00332"/>
    </source>
</evidence>
<evidence type="ECO:0000256" key="2">
    <source>
        <dbReference type="SAM" id="MobiDB-lite"/>
    </source>
</evidence>
<feature type="chain" id="PRO_1000079243" description="Chaperone protein DnaK">
    <location>
        <begin position="1"/>
        <end position="613"/>
    </location>
</feature>
<feature type="region of interest" description="Disordered" evidence="2">
    <location>
        <begin position="487"/>
        <end position="509"/>
    </location>
</feature>
<feature type="region of interest" description="Disordered" evidence="2">
    <location>
        <begin position="567"/>
        <end position="613"/>
    </location>
</feature>
<feature type="compositionally biased region" description="Polar residues" evidence="2">
    <location>
        <begin position="567"/>
        <end position="576"/>
    </location>
</feature>
<feature type="compositionally biased region" description="Low complexity" evidence="2">
    <location>
        <begin position="577"/>
        <end position="598"/>
    </location>
</feature>
<feature type="modified residue" description="Phosphothreonine; by autocatalysis" evidence="1">
    <location>
        <position position="175"/>
    </location>
</feature>